<dbReference type="EC" id="4.1.99.17" evidence="1"/>
<dbReference type="EMBL" id="CU928158">
    <property type="protein sequence ID" value="CAQ91211.1"/>
    <property type="molecule type" value="Genomic_DNA"/>
</dbReference>
<dbReference type="RefSeq" id="WP_001276893.1">
    <property type="nucleotide sequence ID" value="NC_011740.1"/>
</dbReference>
<dbReference type="SMR" id="B7LUK8"/>
<dbReference type="GeneID" id="75059364"/>
<dbReference type="KEGG" id="efe:EFER_3760"/>
<dbReference type="HOGENOM" id="CLU_013181_2_1_6"/>
<dbReference type="OrthoDB" id="9805897at2"/>
<dbReference type="UniPathway" id="UPA00060"/>
<dbReference type="Proteomes" id="UP000000745">
    <property type="component" value="Chromosome"/>
</dbReference>
<dbReference type="GO" id="GO:0005829">
    <property type="term" value="C:cytosol"/>
    <property type="evidence" value="ECO:0007669"/>
    <property type="project" value="TreeGrafter"/>
</dbReference>
<dbReference type="GO" id="GO:0051539">
    <property type="term" value="F:4 iron, 4 sulfur cluster binding"/>
    <property type="evidence" value="ECO:0007669"/>
    <property type="project" value="UniProtKB-KW"/>
</dbReference>
<dbReference type="GO" id="GO:0016830">
    <property type="term" value="F:carbon-carbon lyase activity"/>
    <property type="evidence" value="ECO:0007669"/>
    <property type="project" value="InterPro"/>
</dbReference>
<dbReference type="GO" id="GO:0008270">
    <property type="term" value="F:zinc ion binding"/>
    <property type="evidence" value="ECO:0007669"/>
    <property type="project" value="UniProtKB-UniRule"/>
</dbReference>
<dbReference type="GO" id="GO:0009228">
    <property type="term" value="P:thiamine biosynthetic process"/>
    <property type="evidence" value="ECO:0007669"/>
    <property type="project" value="UniProtKB-KW"/>
</dbReference>
<dbReference type="GO" id="GO:0009229">
    <property type="term" value="P:thiamine diphosphate biosynthetic process"/>
    <property type="evidence" value="ECO:0007669"/>
    <property type="project" value="UniProtKB-UniRule"/>
</dbReference>
<dbReference type="FunFam" id="3.20.20.540:FF:000001">
    <property type="entry name" value="Phosphomethylpyrimidine synthase"/>
    <property type="match status" value="1"/>
</dbReference>
<dbReference type="Gene3D" id="6.10.250.620">
    <property type="match status" value="1"/>
</dbReference>
<dbReference type="Gene3D" id="3.20.20.540">
    <property type="entry name" value="Radical SAM ThiC family, central domain"/>
    <property type="match status" value="1"/>
</dbReference>
<dbReference type="HAMAP" id="MF_00089">
    <property type="entry name" value="ThiC"/>
    <property type="match status" value="1"/>
</dbReference>
<dbReference type="InterPro" id="IPR037509">
    <property type="entry name" value="ThiC"/>
</dbReference>
<dbReference type="InterPro" id="IPR025747">
    <property type="entry name" value="ThiC-associated_dom"/>
</dbReference>
<dbReference type="InterPro" id="IPR038521">
    <property type="entry name" value="ThiC/Bza_core_dom"/>
</dbReference>
<dbReference type="InterPro" id="IPR002817">
    <property type="entry name" value="ThiC/BzaA/B"/>
</dbReference>
<dbReference type="NCBIfam" id="NF006763">
    <property type="entry name" value="PRK09284.1"/>
    <property type="match status" value="1"/>
</dbReference>
<dbReference type="NCBIfam" id="NF009895">
    <property type="entry name" value="PRK13352.1"/>
    <property type="match status" value="1"/>
</dbReference>
<dbReference type="NCBIfam" id="TIGR00190">
    <property type="entry name" value="thiC"/>
    <property type="match status" value="1"/>
</dbReference>
<dbReference type="PANTHER" id="PTHR30557:SF1">
    <property type="entry name" value="PHOSPHOMETHYLPYRIMIDINE SYNTHASE, CHLOROPLASTIC"/>
    <property type="match status" value="1"/>
</dbReference>
<dbReference type="PANTHER" id="PTHR30557">
    <property type="entry name" value="THIAMINE BIOSYNTHESIS PROTEIN THIC"/>
    <property type="match status" value="1"/>
</dbReference>
<dbReference type="Pfam" id="PF13667">
    <property type="entry name" value="ThiC-associated"/>
    <property type="match status" value="1"/>
</dbReference>
<dbReference type="Pfam" id="PF01964">
    <property type="entry name" value="ThiC_Rad_SAM"/>
    <property type="match status" value="1"/>
</dbReference>
<dbReference type="SFLD" id="SFLDF00407">
    <property type="entry name" value="phosphomethylpyrimidine_syntha"/>
    <property type="match status" value="1"/>
</dbReference>
<dbReference type="SFLD" id="SFLDG01114">
    <property type="entry name" value="phosphomethylpyrimidine_syntha"/>
    <property type="match status" value="1"/>
</dbReference>
<dbReference type="SFLD" id="SFLDS00113">
    <property type="entry name" value="Radical_SAM_Phosphomethylpyrim"/>
    <property type="match status" value="1"/>
</dbReference>
<name>THIC_ESCF3</name>
<accession>B7LUK8</accession>
<feature type="chain" id="PRO_1000198058" description="Phosphomethylpyrimidine synthase">
    <location>
        <begin position="1"/>
        <end position="631"/>
    </location>
</feature>
<feature type="binding site" evidence="1">
    <location>
        <position position="239"/>
    </location>
    <ligand>
        <name>substrate</name>
    </ligand>
</feature>
<feature type="binding site" evidence="1">
    <location>
        <position position="268"/>
    </location>
    <ligand>
        <name>substrate</name>
    </ligand>
</feature>
<feature type="binding site" evidence="1">
    <location>
        <position position="297"/>
    </location>
    <ligand>
        <name>substrate</name>
    </ligand>
</feature>
<feature type="binding site" evidence="1">
    <location>
        <position position="333"/>
    </location>
    <ligand>
        <name>substrate</name>
    </ligand>
</feature>
<feature type="binding site" evidence="1">
    <location>
        <begin position="353"/>
        <end position="355"/>
    </location>
    <ligand>
        <name>substrate</name>
    </ligand>
</feature>
<feature type="binding site" evidence="1">
    <location>
        <begin position="394"/>
        <end position="397"/>
    </location>
    <ligand>
        <name>substrate</name>
    </ligand>
</feature>
<feature type="binding site" evidence="1">
    <location>
        <position position="433"/>
    </location>
    <ligand>
        <name>substrate</name>
    </ligand>
</feature>
<feature type="binding site" evidence="1">
    <location>
        <position position="437"/>
    </location>
    <ligand>
        <name>Zn(2+)</name>
        <dbReference type="ChEBI" id="CHEBI:29105"/>
    </ligand>
</feature>
<feature type="binding site" evidence="1">
    <location>
        <position position="460"/>
    </location>
    <ligand>
        <name>substrate</name>
    </ligand>
</feature>
<feature type="binding site" evidence="1">
    <location>
        <position position="501"/>
    </location>
    <ligand>
        <name>Zn(2+)</name>
        <dbReference type="ChEBI" id="CHEBI:29105"/>
    </ligand>
</feature>
<feature type="binding site" evidence="1">
    <location>
        <position position="581"/>
    </location>
    <ligand>
        <name>[4Fe-4S] cluster</name>
        <dbReference type="ChEBI" id="CHEBI:49883"/>
        <note>4Fe-4S-S-AdoMet</note>
    </ligand>
</feature>
<feature type="binding site" evidence="1">
    <location>
        <position position="584"/>
    </location>
    <ligand>
        <name>[4Fe-4S] cluster</name>
        <dbReference type="ChEBI" id="CHEBI:49883"/>
        <note>4Fe-4S-S-AdoMet</note>
    </ligand>
</feature>
<feature type="binding site" evidence="1">
    <location>
        <position position="589"/>
    </location>
    <ligand>
        <name>[4Fe-4S] cluster</name>
        <dbReference type="ChEBI" id="CHEBI:49883"/>
        <note>4Fe-4S-S-AdoMet</note>
    </ligand>
</feature>
<keyword id="KW-0004">4Fe-4S</keyword>
<keyword id="KW-0408">Iron</keyword>
<keyword id="KW-0411">Iron-sulfur</keyword>
<keyword id="KW-0456">Lyase</keyword>
<keyword id="KW-0479">Metal-binding</keyword>
<keyword id="KW-0949">S-adenosyl-L-methionine</keyword>
<keyword id="KW-0784">Thiamine biosynthesis</keyword>
<keyword id="KW-0862">Zinc</keyword>
<organism>
    <name type="scientific">Escherichia fergusonii (strain ATCC 35469 / DSM 13698 / CCUG 18766 / IAM 14443 / JCM 21226 / LMG 7866 / NBRC 102419 / NCTC 12128 / CDC 0568-73)</name>
    <dbReference type="NCBI Taxonomy" id="585054"/>
    <lineage>
        <taxon>Bacteria</taxon>
        <taxon>Pseudomonadati</taxon>
        <taxon>Pseudomonadota</taxon>
        <taxon>Gammaproteobacteria</taxon>
        <taxon>Enterobacterales</taxon>
        <taxon>Enterobacteriaceae</taxon>
        <taxon>Escherichia</taxon>
    </lineage>
</organism>
<sequence length="631" mass="70807">MSATKLTRREQRAQAQHFIDTLEGTAFPNSKRIYITGTHPGVRVPMREIQLSPTLIGGSKEQPQYEENEAIPVYDTSGPYGDPQIAINVQQGLAKLRQPWIDARGDTEELTVRSSDYTKARLADDGLDELRFSGVLTPKRAKAGRRVTQLHYARRGIITPEMEFIAIRENMGRERIRSEVLRHQHPGMSFGARLPENITAEFVRDEVAAGRAIIPANINHPESEPMIIGRNFLVKVNANIGNSAVTSSIEEEVEKLVWSTRWGADTVMDLSTGRYIHETREWILRNSPVPIGTVPIYQALEKVNGIAEDLTWEAFRDTLLEQAEQGVDYFTIHAGVLLRYVPMTAKRLTGIVSRGGSIMAKWCLSHHQENFLYQHFREICEICAAYDVSLSLGDGLRPGSIQDANDEAQFAELHTLGELTKIAWEYDVQVMIEGPGHVPMQMIRRNMTEELEHCHEAPFYTLGPLTTDIAPGYDHFTSGIGAAMIGWFGCAMLCYVTPKEHLGLPNKEDVKQGLITYKIAAHAADLAKGHPGAQIRDNAMSKARFEFRWEDQFNLALDPFTARAYHDETLPQESGKVAHFCSMCGPKFCSMKISQEVRDYAAAQTIEVGMADMSENFRARGGEIYLRKEEA</sequence>
<evidence type="ECO:0000255" key="1">
    <source>
        <dbReference type="HAMAP-Rule" id="MF_00089"/>
    </source>
</evidence>
<protein>
    <recommendedName>
        <fullName evidence="1">Phosphomethylpyrimidine synthase</fullName>
        <ecNumber evidence="1">4.1.99.17</ecNumber>
    </recommendedName>
    <alternativeName>
        <fullName evidence="1">Hydroxymethylpyrimidine phosphate synthase</fullName>
        <shortName evidence="1">HMP-P synthase</shortName>
        <shortName evidence="1">HMP-phosphate synthase</shortName>
        <shortName evidence="1">HMPP synthase</shortName>
    </alternativeName>
    <alternativeName>
        <fullName evidence="1">Thiamine biosynthesis protein ThiC</fullName>
    </alternativeName>
</protein>
<proteinExistence type="inferred from homology"/>
<gene>
    <name evidence="1" type="primary">thiC</name>
    <name type="ordered locus">EFER_3760</name>
</gene>
<comment type="function">
    <text evidence="1">Catalyzes the synthesis of the hydroxymethylpyrimidine phosphate (HMP-P) moiety of thiamine from aminoimidazole ribotide (AIR) in a radical S-adenosyl-L-methionine (SAM)-dependent reaction.</text>
</comment>
<comment type="catalytic activity">
    <reaction evidence="1">
        <text>5-amino-1-(5-phospho-beta-D-ribosyl)imidazole + S-adenosyl-L-methionine = 4-amino-2-methyl-5-(phosphooxymethyl)pyrimidine + CO + 5'-deoxyadenosine + formate + L-methionine + 3 H(+)</text>
        <dbReference type="Rhea" id="RHEA:24840"/>
        <dbReference type="ChEBI" id="CHEBI:15378"/>
        <dbReference type="ChEBI" id="CHEBI:15740"/>
        <dbReference type="ChEBI" id="CHEBI:17245"/>
        <dbReference type="ChEBI" id="CHEBI:17319"/>
        <dbReference type="ChEBI" id="CHEBI:57844"/>
        <dbReference type="ChEBI" id="CHEBI:58354"/>
        <dbReference type="ChEBI" id="CHEBI:59789"/>
        <dbReference type="ChEBI" id="CHEBI:137981"/>
        <dbReference type="EC" id="4.1.99.17"/>
    </reaction>
</comment>
<comment type="cofactor">
    <cofactor evidence="1">
        <name>[4Fe-4S] cluster</name>
        <dbReference type="ChEBI" id="CHEBI:49883"/>
    </cofactor>
    <text evidence="1">Binds 1 [4Fe-4S] cluster per subunit. The cluster is coordinated with 3 cysteines and an exchangeable S-adenosyl-L-methionine.</text>
</comment>
<comment type="pathway">
    <text evidence="1">Cofactor biosynthesis; thiamine diphosphate biosynthesis.</text>
</comment>
<comment type="subunit">
    <text evidence="1">Homodimer.</text>
</comment>
<comment type="similarity">
    <text evidence="1">Belongs to the ThiC family.</text>
</comment>
<reference key="1">
    <citation type="journal article" date="2009" name="PLoS Genet.">
        <title>Organised genome dynamics in the Escherichia coli species results in highly diverse adaptive paths.</title>
        <authorList>
            <person name="Touchon M."/>
            <person name="Hoede C."/>
            <person name="Tenaillon O."/>
            <person name="Barbe V."/>
            <person name="Baeriswyl S."/>
            <person name="Bidet P."/>
            <person name="Bingen E."/>
            <person name="Bonacorsi S."/>
            <person name="Bouchier C."/>
            <person name="Bouvet O."/>
            <person name="Calteau A."/>
            <person name="Chiapello H."/>
            <person name="Clermont O."/>
            <person name="Cruveiller S."/>
            <person name="Danchin A."/>
            <person name="Diard M."/>
            <person name="Dossat C."/>
            <person name="Karoui M.E."/>
            <person name="Frapy E."/>
            <person name="Garry L."/>
            <person name="Ghigo J.M."/>
            <person name="Gilles A.M."/>
            <person name="Johnson J."/>
            <person name="Le Bouguenec C."/>
            <person name="Lescat M."/>
            <person name="Mangenot S."/>
            <person name="Martinez-Jehanne V."/>
            <person name="Matic I."/>
            <person name="Nassif X."/>
            <person name="Oztas S."/>
            <person name="Petit M.A."/>
            <person name="Pichon C."/>
            <person name="Rouy Z."/>
            <person name="Ruf C.S."/>
            <person name="Schneider D."/>
            <person name="Tourret J."/>
            <person name="Vacherie B."/>
            <person name="Vallenet D."/>
            <person name="Medigue C."/>
            <person name="Rocha E.P.C."/>
            <person name="Denamur E."/>
        </authorList>
    </citation>
    <scope>NUCLEOTIDE SEQUENCE [LARGE SCALE GENOMIC DNA]</scope>
    <source>
        <strain>ATCC 35469 / DSM 13698 / BCRC 15582 / CCUG 18766 / IAM 14443 / JCM 21226 / LMG 7866 / NBRC 102419 / NCTC 12128 / CDC 0568-73</strain>
    </source>
</reference>